<protein>
    <recommendedName>
        <fullName evidence="25">Rap1 GTPase-GDP dissociation stimulator 1</fullName>
    </recommendedName>
    <alternativeName>
        <fullName evidence="20">Exchange factor smgGDS</fullName>
    </alternativeName>
    <alternativeName>
        <fullName evidence="20">SMG GDS protein</fullName>
    </alternativeName>
    <alternativeName>
        <fullName evidence="22">SMG P21 stimulatory GDP/GTP exchange protein</fullName>
    </alternativeName>
</protein>
<dbReference type="EMBL" id="X63465">
    <property type="protein sequence ID" value="CAA45067.1"/>
    <property type="molecule type" value="mRNA"/>
</dbReference>
<dbReference type="EMBL" id="AF215923">
    <property type="protein sequence ID" value="AAF32290.1"/>
    <property type="molecule type" value="mRNA"/>
</dbReference>
<dbReference type="EMBL" id="AF237413">
    <property type="protein sequence ID" value="AAF43211.1"/>
    <property type="molecule type" value="mRNA"/>
</dbReference>
<dbReference type="EMBL" id="AC019077">
    <property type="status" value="NOT_ANNOTATED_CDS"/>
    <property type="molecule type" value="Genomic_DNA"/>
</dbReference>
<dbReference type="EMBL" id="AC058823">
    <property type="status" value="NOT_ANNOTATED_CDS"/>
    <property type="molecule type" value="Genomic_DNA"/>
</dbReference>
<dbReference type="EMBL" id="AC078961">
    <property type="status" value="NOT_ANNOTATED_CDS"/>
    <property type="molecule type" value="Genomic_DNA"/>
</dbReference>
<dbReference type="EMBL" id="CH471057">
    <property type="protein sequence ID" value="EAX06069.1"/>
    <property type="molecule type" value="Genomic_DNA"/>
</dbReference>
<dbReference type="EMBL" id="CH471057">
    <property type="protein sequence ID" value="EAX06071.1"/>
    <property type="molecule type" value="Genomic_DNA"/>
</dbReference>
<dbReference type="EMBL" id="BC001816">
    <property type="protein sequence ID" value="AAH01816.1"/>
    <property type="molecule type" value="mRNA"/>
</dbReference>
<dbReference type="EMBL" id="BC001851">
    <property type="protein sequence ID" value="AAH01851.2"/>
    <property type="molecule type" value="mRNA"/>
</dbReference>
<dbReference type="EMBL" id="BT006837">
    <property type="protein sequence ID" value="AAP35483.1"/>
    <property type="molecule type" value="mRNA"/>
</dbReference>
<dbReference type="EMBL" id="BC098269">
    <property type="protein sequence ID" value="AAH98269.1"/>
    <property type="molecule type" value="mRNA"/>
</dbReference>
<dbReference type="EMBL" id="BC098334">
    <property type="protein sequence ID" value="AAH98334.1"/>
    <property type="molecule type" value="mRNA"/>
</dbReference>
<dbReference type="EMBL" id="BC099708">
    <property type="protein sequence ID" value="AAH99708.1"/>
    <property type="molecule type" value="mRNA"/>
</dbReference>
<dbReference type="EMBL" id="BC099845">
    <property type="protein sequence ID" value="AAH99845.1"/>
    <property type="molecule type" value="mRNA"/>
</dbReference>
<dbReference type="CCDS" id="CCDS43253.1">
    <molecule id="P52306-1"/>
</dbReference>
<dbReference type="CCDS" id="CCDS43254.1">
    <molecule id="P52306-2"/>
</dbReference>
<dbReference type="CCDS" id="CCDS47105.1">
    <molecule id="P52306-5"/>
</dbReference>
<dbReference type="CCDS" id="CCDS47106.1">
    <molecule id="P52306-4"/>
</dbReference>
<dbReference type="CCDS" id="CCDS47107.1">
    <molecule id="P52306-3"/>
</dbReference>
<dbReference type="CCDS" id="CCDS47108.1">
    <molecule id="P52306-6"/>
</dbReference>
<dbReference type="PIR" id="I37456">
    <property type="entry name" value="I37456"/>
</dbReference>
<dbReference type="RefSeq" id="NP_001093896.1">
    <molecule id="P52306-5"/>
    <property type="nucleotide sequence ID" value="NM_001100426.2"/>
</dbReference>
<dbReference type="RefSeq" id="NP_001093897.1">
    <molecule id="P52306-1"/>
    <property type="nucleotide sequence ID" value="NM_001100427.2"/>
</dbReference>
<dbReference type="RefSeq" id="NP_001093898.1">
    <molecule id="P52306-3"/>
    <property type="nucleotide sequence ID" value="NM_001100428.2"/>
</dbReference>
<dbReference type="RefSeq" id="NP_001093899.1">
    <molecule id="P52306-2"/>
    <property type="nucleotide sequence ID" value="NM_001100429.2"/>
</dbReference>
<dbReference type="RefSeq" id="NP_001093900.1">
    <molecule id="P52306-6"/>
    <property type="nucleotide sequence ID" value="NM_001100430.2"/>
</dbReference>
<dbReference type="RefSeq" id="NP_066982.3">
    <molecule id="P52306-4"/>
    <property type="nucleotide sequence ID" value="NM_021159.4"/>
</dbReference>
<dbReference type="PDB" id="5XGC">
    <property type="method" value="X-ray"/>
    <property type="resolution" value="2.10 A"/>
    <property type="chains" value="A=61-607"/>
</dbReference>
<dbReference type="PDB" id="5ZHX">
    <property type="method" value="X-ray"/>
    <property type="resolution" value="3.50 A"/>
    <property type="chains" value="A/B/C/D=77-607"/>
</dbReference>
<dbReference type="PDBsum" id="5XGC"/>
<dbReference type="PDBsum" id="5ZHX"/>
<dbReference type="SMR" id="P52306"/>
<dbReference type="BioGRID" id="111845">
    <property type="interactions" value="164"/>
</dbReference>
<dbReference type="DIP" id="DIP-61080N"/>
<dbReference type="FunCoup" id="P52306">
    <property type="interactions" value="3176"/>
</dbReference>
<dbReference type="IntAct" id="P52306">
    <property type="interactions" value="86"/>
</dbReference>
<dbReference type="MINT" id="P52306"/>
<dbReference type="STRING" id="9606.ENSP00000340454"/>
<dbReference type="GlyGen" id="P52306">
    <property type="glycosylation" value="1 site, 1 O-linked glycan (1 site)"/>
</dbReference>
<dbReference type="iPTMnet" id="P52306"/>
<dbReference type="MetOSite" id="P52306"/>
<dbReference type="PhosphoSitePlus" id="P52306"/>
<dbReference type="SwissPalm" id="P52306"/>
<dbReference type="BioMuta" id="RAP1GDS1"/>
<dbReference type="DMDM" id="212276504"/>
<dbReference type="jPOST" id="P52306"/>
<dbReference type="MassIVE" id="P52306"/>
<dbReference type="PaxDb" id="9606-ENSP00000340454"/>
<dbReference type="PeptideAtlas" id="P52306"/>
<dbReference type="ProteomicsDB" id="20432"/>
<dbReference type="ProteomicsDB" id="34006"/>
<dbReference type="ProteomicsDB" id="56479">
    <molecule id="P52306-1"/>
</dbReference>
<dbReference type="ProteomicsDB" id="56480">
    <molecule id="P52306-2"/>
</dbReference>
<dbReference type="ProteomicsDB" id="56481">
    <molecule id="P52306-3"/>
</dbReference>
<dbReference type="Pumba" id="P52306"/>
<dbReference type="Antibodypedia" id="6907">
    <property type="antibodies" value="146 antibodies from 30 providers"/>
</dbReference>
<dbReference type="DNASU" id="5910"/>
<dbReference type="Ensembl" id="ENST00000264572.11">
    <molecule id="P52306-6"/>
    <property type="protein sequence ID" value="ENSP00000264572.7"/>
    <property type="gene ID" value="ENSG00000138698.15"/>
</dbReference>
<dbReference type="Ensembl" id="ENST00000339360.9">
    <molecule id="P52306-5"/>
    <property type="protein sequence ID" value="ENSP00000340454.5"/>
    <property type="gene ID" value="ENSG00000138698.15"/>
</dbReference>
<dbReference type="Ensembl" id="ENST00000380158.8">
    <molecule id="P52306-3"/>
    <property type="protein sequence ID" value="ENSP00000369503.4"/>
    <property type="gene ID" value="ENSG00000138698.15"/>
</dbReference>
<dbReference type="Ensembl" id="ENST00000408900.7">
    <molecule id="P52306-2"/>
    <property type="protein sequence ID" value="ENSP00000386223.3"/>
    <property type="gene ID" value="ENSG00000138698.15"/>
</dbReference>
<dbReference type="Ensembl" id="ENST00000408927.8">
    <molecule id="P52306-1"/>
    <property type="protein sequence ID" value="ENSP00000386153.4"/>
    <property type="gene ID" value="ENSG00000138698.15"/>
</dbReference>
<dbReference type="Ensembl" id="ENST00000453712.6">
    <molecule id="P52306-4"/>
    <property type="protein sequence ID" value="ENSP00000407157.2"/>
    <property type="gene ID" value="ENSG00000138698.15"/>
</dbReference>
<dbReference type="GeneID" id="5910"/>
<dbReference type="KEGG" id="hsa:5910"/>
<dbReference type="MANE-Select" id="ENST00000408927.8">
    <property type="protein sequence ID" value="ENSP00000386153.4"/>
    <property type="RefSeq nucleotide sequence ID" value="NM_001100427.2"/>
    <property type="RefSeq protein sequence ID" value="NP_001093897.1"/>
</dbReference>
<dbReference type="UCSC" id="uc003htv.5">
    <molecule id="P52306-1"/>
    <property type="organism name" value="human"/>
</dbReference>
<dbReference type="AGR" id="HGNC:9859"/>
<dbReference type="CTD" id="5910"/>
<dbReference type="DisGeNET" id="5910"/>
<dbReference type="GeneCards" id="RAP1GDS1"/>
<dbReference type="HGNC" id="HGNC:9859">
    <property type="gene designation" value="RAP1GDS1"/>
</dbReference>
<dbReference type="HPA" id="ENSG00000138698">
    <property type="expression patterns" value="Low tissue specificity"/>
</dbReference>
<dbReference type="MalaCards" id="RAP1GDS1"/>
<dbReference type="MIM" id="179502">
    <property type="type" value="gene"/>
</dbReference>
<dbReference type="MIM" id="620655">
    <property type="type" value="phenotype"/>
</dbReference>
<dbReference type="neXtProt" id="NX_P52306"/>
<dbReference type="OpenTargets" id="ENSG00000138698"/>
<dbReference type="PharmGKB" id="PA34221"/>
<dbReference type="VEuPathDB" id="HostDB:ENSG00000138698"/>
<dbReference type="eggNOG" id="KOG4500">
    <property type="taxonomic scope" value="Eukaryota"/>
</dbReference>
<dbReference type="GeneTree" id="ENSGT00390000014293"/>
<dbReference type="HOGENOM" id="CLU_021124_1_0_1"/>
<dbReference type="InParanoid" id="P52306"/>
<dbReference type="OMA" id="NGTEHQM"/>
<dbReference type="OrthoDB" id="26149at2759"/>
<dbReference type="PAN-GO" id="P52306">
    <property type="GO annotations" value="2 GO annotations based on evolutionary models"/>
</dbReference>
<dbReference type="PhylomeDB" id="P52306"/>
<dbReference type="PathwayCommons" id="P52306"/>
<dbReference type="Reactome" id="R-HSA-9013419">
    <property type="pathway name" value="RHOT2 GTPase cycle"/>
</dbReference>
<dbReference type="Reactome" id="R-HSA-9013425">
    <property type="pathway name" value="RHOT1 GTPase cycle"/>
</dbReference>
<dbReference type="SignaLink" id="P52306"/>
<dbReference type="SIGNOR" id="P52306"/>
<dbReference type="BioGRID-ORCS" id="5910">
    <property type="hits" value="19 hits in 1165 CRISPR screens"/>
</dbReference>
<dbReference type="CD-CODE" id="232F8A39">
    <property type="entry name" value="P-body"/>
</dbReference>
<dbReference type="CD-CODE" id="FB4E32DD">
    <property type="entry name" value="Presynaptic clusters and postsynaptic densities"/>
</dbReference>
<dbReference type="ChiTaRS" id="RAP1GDS1">
    <property type="organism name" value="human"/>
</dbReference>
<dbReference type="GeneWiki" id="RAP1GDS1"/>
<dbReference type="GenomeRNAi" id="5910"/>
<dbReference type="Pharos" id="P52306">
    <property type="development level" value="Tbio"/>
</dbReference>
<dbReference type="PRO" id="PR:P52306"/>
<dbReference type="Proteomes" id="UP000005640">
    <property type="component" value="Chromosome 4"/>
</dbReference>
<dbReference type="RNAct" id="P52306">
    <property type="molecule type" value="protein"/>
</dbReference>
<dbReference type="Bgee" id="ENSG00000138698">
    <property type="expression patterns" value="Expressed in lateral nuclear group of thalamus and 208 other cell types or tissues"/>
</dbReference>
<dbReference type="ExpressionAtlas" id="P52306">
    <property type="expression patterns" value="baseline and differential"/>
</dbReference>
<dbReference type="GO" id="GO:0005829">
    <property type="term" value="C:cytosol"/>
    <property type="evidence" value="ECO:0000314"/>
    <property type="project" value="UniProtKB"/>
</dbReference>
<dbReference type="GO" id="GO:0005783">
    <property type="term" value="C:endoplasmic reticulum"/>
    <property type="evidence" value="ECO:0000314"/>
    <property type="project" value="UniProtKB"/>
</dbReference>
<dbReference type="GO" id="GO:0070062">
    <property type="term" value="C:extracellular exosome"/>
    <property type="evidence" value="ECO:0007005"/>
    <property type="project" value="UniProtKB"/>
</dbReference>
<dbReference type="GO" id="GO:0005739">
    <property type="term" value="C:mitochondrion"/>
    <property type="evidence" value="ECO:0000314"/>
    <property type="project" value="UniProtKB"/>
</dbReference>
<dbReference type="GO" id="GO:0005634">
    <property type="term" value="C:nucleus"/>
    <property type="evidence" value="ECO:0000314"/>
    <property type="project" value="UniProtKB"/>
</dbReference>
<dbReference type="GO" id="GO:0005085">
    <property type="term" value="F:guanyl-nucleotide exchange factor activity"/>
    <property type="evidence" value="ECO:0000314"/>
    <property type="project" value="UniProtKB"/>
</dbReference>
<dbReference type="GO" id="GO:0086098">
    <property type="term" value="P:angiotensin-activated signaling pathway involved in heart process"/>
    <property type="evidence" value="ECO:0007669"/>
    <property type="project" value="Ensembl"/>
</dbReference>
<dbReference type="GO" id="GO:0080120">
    <property type="term" value="P:CAAX-box protein maturation"/>
    <property type="evidence" value="ECO:0000315"/>
    <property type="project" value="UniProtKB"/>
</dbReference>
<dbReference type="GO" id="GO:0003300">
    <property type="term" value="P:cardiac muscle hypertrophy"/>
    <property type="evidence" value="ECO:0007669"/>
    <property type="project" value="Ensembl"/>
</dbReference>
<dbReference type="GO" id="GO:0031034">
    <property type="term" value="P:myosin filament assembly"/>
    <property type="evidence" value="ECO:0007669"/>
    <property type="project" value="Ensembl"/>
</dbReference>
<dbReference type="GO" id="GO:0032471">
    <property type="term" value="P:negative regulation of endoplasmic reticulum calcium ion concentration"/>
    <property type="evidence" value="ECO:0000315"/>
    <property type="project" value="UniProtKB"/>
</dbReference>
<dbReference type="GO" id="GO:0051561">
    <property type="term" value="P:positive regulation of mitochondrial calcium ion concentration"/>
    <property type="evidence" value="ECO:0000315"/>
    <property type="project" value="UniProtKB"/>
</dbReference>
<dbReference type="GO" id="GO:0034504">
    <property type="term" value="P:protein localization to nucleus"/>
    <property type="evidence" value="ECO:0000315"/>
    <property type="project" value="UniProtKB"/>
</dbReference>
<dbReference type="GO" id="GO:0070376">
    <property type="term" value="P:regulation of ERK5 cascade"/>
    <property type="evidence" value="ECO:0007669"/>
    <property type="project" value="Ensembl"/>
</dbReference>
<dbReference type="GO" id="GO:1904464">
    <property type="term" value="P:regulation of matrix metallopeptidase secretion"/>
    <property type="evidence" value="ECO:0007669"/>
    <property type="project" value="Ensembl"/>
</dbReference>
<dbReference type="GO" id="GO:0010821">
    <property type="term" value="P:regulation of mitochondrion organization"/>
    <property type="evidence" value="ECO:0000315"/>
    <property type="project" value="UniProtKB"/>
</dbReference>
<dbReference type="GO" id="GO:0014829">
    <property type="term" value="P:vascular associated smooth muscle contraction"/>
    <property type="evidence" value="ECO:0007669"/>
    <property type="project" value="Ensembl"/>
</dbReference>
<dbReference type="FunFam" id="1.25.10.10:FF:000127">
    <property type="entry name" value="rap1 GTPase-GDP dissociation stimulator 1 isoform X1"/>
    <property type="match status" value="1"/>
</dbReference>
<dbReference type="FunFam" id="1.25.10.10:FF:000141">
    <property type="entry name" value="rap1 GTPase-GDP dissociation stimulator 1 isoform X1"/>
    <property type="match status" value="1"/>
</dbReference>
<dbReference type="FunFam" id="1.25.10.10:FF:000144">
    <property type="entry name" value="rap1 GTPase-GDP dissociation stimulator 1 isoform X1"/>
    <property type="match status" value="1"/>
</dbReference>
<dbReference type="Gene3D" id="1.25.10.10">
    <property type="entry name" value="Leucine-rich Repeat Variant"/>
    <property type="match status" value="3"/>
</dbReference>
<dbReference type="InterPro" id="IPR011989">
    <property type="entry name" value="ARM-like"/>
</dbReference>
<dbReference type="InterPro" id="IPR016024">
    <property type="entry name" value="ARM-type_fold"/>
</dbReference>
<dbReference type="InterPro" id="IPR000225">
    <property type="entry name" value="Armadillo"/>
</dbReference>
<dbReference type="InterPro" id="IPR040144">
    <property type="entry name" value="RAP1GDS1"/>
</dbReference>
<dbReference type="PANTHER" id="PTHR10957">
    <property type="entry name" value="RAP1 GTPASE-GDP DISSOCIATION STIMULATOR 1"/>
    <property type="match status" value="1"/>
</dbReference>
<dbReference type="Pfam" id="PF00514">
    <property type="entry name" value="Arm"/>
    <property type="match status" value="4"/>
</dbReference>
<dbReference type="SMART" id="SM00185">
    <property type="entry name" value="ARM"/>
    <property type="match status" value="5"/>
</dbReference>
<dbReference type="SUPFAM" id="SSF48371">
    <property type="entry name" value="ARM repeat"/>
    <property type="match status" value="2"/>
</dbReference>
<dbReference type="PROSITE" id="PS50176">
    <property type="entry name" value="ARM_REPEAT"/>
    <property type="match status" value="2"/>
</dbReference>
<evidence type="ECO:0000255" key="1"/>
<evidence type="ECO:0000255" key="2">
    <source>
        <dbReference type="PROSITE-ProRule" id="PRU00259"/>
    </source>
</evidence>
<evidence type="ECO:0000269" key="3">
    <source>
    </source>
</evidence>
<evidence type="ECO:0000269" key="4">
    <source>
    </source>
</evidence>
<evidence type="ECO:0000269" key="5">
    <source>
    </source>
</evidence>
<evidence type="ECO:0000269" key="6">
    <source>
    </source>
</evidence>
<evidence type="ECO:0000269" key="7">
    <source>
    </source>
</evidence>
<evidence type="ECO:0000269" key="8">
    <source>
    </source>
</evidence>
<evidence type="ECO:0000269" key="9">
    <source>
    </source>
</evidence>
<evidence type="ECO:0000269" key="10">
    <source>
    </source>
</evidence>
<evidence type="ECO:0000269" key="11">
    <source>
    </source>
</evidence>
<evidence type="ECO:0000269" key="12">
    <source>
    </source>
</evidence>
<evidence type="ECO:0000269" key="13">
    <source>
    </source>
</evidence>
<evidence type="ECO:0000269" key="14">
    <source>
    </source>
</evidence>
<evidence type="ECO:0000269" key="15">
    <source>
    </source>
</evidence>
<evidence type="ECO:0000269" key="16">
    <source>
    </source>
</evidence>
<evidence type="ECO:0000269" key="17">
    <source>
    </source>
</evidence>
<evidence type="ECO:0000269" key="18">
    <source>
    </source>
</evidence>
<evidence type="ECO:0000269" key="19">
    <source>
    </source>
</evidence>
<evidence type="ECO:0000303" key="20">
    <source>
    </source>
</evidence>
<evidence type="ECO:0000303" key="21">
    <source>
    </source>
</evidence>
<evidence type="ECO:0000303" key="22">
    <source>
    </source>
</evidence>
<evidence type="ECO:0000303" key="23">
    <source>
    </source>
</evidence>
<evidence type="ECO:0000303" key="24">
    <source ref="3"/>
</evidence>
<evidence type="ECO:0000305" key="25"/>
<evidence type="ECO:0000305" key="26">
    <source>
    </source>
</evidence>
<evidence type="ECO:0007744" key="27">
    <source>
        <dbReference type="PDB" id="5XGC"/>
    </source>
</evidence>
<evidence type="ECO:0007744" key="28">
    <source>
        <dbReference type="PDB" id="5ZHX"/>
    </source>
</evidence>
<evidence type="ECO:0007744" key="29">
    <source>
    </source>
</evidence>
<evidence type="ECO:0007829" key="30">
    <source>
        <dbReference type="PDB" id="5XGC"/>
    </source>
</evidence>
<evidence type="ECO:0007829" key="31">
    <source>
        <dbReference type="PDB" id="5ZHX"/>
    </source>
</evidence>
<sequence length="607" mass="66317">MDNLSDTLKKLKITAVDKTEDSLEGCLDCLLQALAQNNTETSEKIQASGILQLFASLLTPQSSCKAKVANIIAEVAKNEFMRIPCVDAGLISPLVQLLNSKDQEVLLQTGRALGNICYDSHEGRSAVDQAGGAQIVIDHLRSLCSITDPANEKLLTVFCGMLMNYSNENDSLQAQLINMGVIPTLVKLLGIHCQNAALTEMCLVAFGNLAELESSKEQFASTNIAEELVKLFKKQIEHDKREMIFEVLAPLAENDAIKLQLVEAGLVECLLEIVQQKVDSDKEDDITELKTGSDLMVLLLLGDESMQKLFEGGKGSVFQRVLSWIPSNNHQLQLAGALAIANFARNDANCIHMVDNGIVEKLMDLLDRHVEDGNVTVQHAALSALRNLAIPVINKAKMLSAGVTEAVLKFLKSEMPPVQFKLLGTLRMLIDAQAEAAEQLGKNVKLVERLVEWCEAKDHAGVMGESNRLLSALIRHSKSKDVIKTIVQSGGIKHLVTMATSEHVIMQNEALVALALIAALELGTAEKDLESAKLVQILHRLLADERSAPEIKYNSMVLICALMGSECLHKEVQDLAFLDVVSKLRSHENKSVAQQASLTEQRLTVES</sequence>
<gene>
    <name evidence="24" type="primary">RAP1GDS1</name>
    <name evidence="24" type="synonym">SMGGDS</name>
</gene>
<reference key="1">
    <citation type="journal article" date="1992" name="Oncogene">
        <title>Molecular cloning of the human cDNA for a stimulatory GDP/GTP exchange protein for c-Ki-ras p21 and smg p21.</title>
        <authorList>
            <person name="Kikuchi A."/>
            <person name="Kaibuchi K."/>
            <person name="Hori Y."/>
            <person name="Nonaka H."/>
            <person name="Sakoda T."/>
            <person name="Kawamura M."/>
            <person name="Mizuno T."/>
            <person name="Takai Y."/>
        </authorList>
    </citation>
    <scope>NUCLEOTIDE SEQUENCE [MRNA] (ISOFORM 2)</scope>
    <scope>FUNCTION</scope>
    <source>
        <tissue>Brain</tissue>
    </source>
</reference>
<reference key="2">
    <citation type="journal article" date="2002" name="Oncogene">
        <title>SmgGDS displays differential binding and exchange activity towards different Ras isoforms.</title>
        <authorList>
            <person name="Vikis H.G."/>
            <person name="Stewart S."/>
            <person name="Guan K.L."/>
        </authorList>
    </citation>
    <scope>NUCLEOTIDE SEQUENCE [MRNA] (ISOFORM 1)</scope>
    <scope>FUNCTION</scope>
</reference>
<reference key="3">
    <citation type="submission" date="2000-02" db="EMBL/GenBank/DDBJ databases">
        <title>The major isoform of RAP1GDS1 mRNA in peripheral blood mononuclear cells encodes an isoform of smgGDS with 12 armadillo repeats.</title>
        <authorList>
            <person name="Hussey D.J."/>
            <person name="Albanese N.O."/>
            <person name="Dobrovic A."/>
        </authorList>
    </citation>
    <scope>NUCLEOTIDE SEQUENCE [MRNA] (ISOFORM 1)</scope>
    <source>
        <tissue>Peripheral blood</tissue>
    </source>
</reference>
<reference key="4">
    <citation type="journal article" date="2005" name="Nature">
        <title>Generation and annotation of the DNA sequences of human chromosomes 2 and 4.</title>
        <authorList>
            <person name="Hillier L.W."/>
            <person name="Graves T.A."/>
            <person name="Fulton R.S."/>
            <person name="Fulton L.A."/>
            <person name="Pepin K.H."/>
            <person name="Minx P."/>
            <person name="Wagner-McPherson C."/>
            <person name="Layman D."/>
            <person name="Wylie K."/>
            <person name="Sekhon M."/>
            <person name="Becker M.C."/>
            <person name="Fewell G.A."/>
            <person name="Delehaunty K.D."/>
            <person name="Miner T.L."/>
            <person name="Nash W.E."/>
            <person name="Kremitzki C."/>
            <person name="Oddy L."/>
            <person name="Du H."/>
            <person name="Sun H."/>
            <person name="Bradshaw-Cordum H."/>
            <person name="Ali J."/>
            <person name="Carter J."/>
            <person name="Cordes M."/>
            <person name="Harris A."/>
            <person name="Isak A."/>
            <person name="van Brunt A."/>
            <person name="Nguyen C."/>
            <person name="Du F."/>
            <person name="Courtney L."/>
            <person name="Kalicki J."/>
            <person name="Ozersky P."/>
            <person name="Abbott S."/>
            <person name="Armstrong J."/>
            <person name="Belter E.A."/>
            <person name="Caruso L."/>
            <person name="Cedroni M."/>
            <person name="Cotton M."/>
            <person name="Davidson T."/>
            <person name="Desai A."/>
            <person name="Elliott G."/>
            <person name="Erb T."/>
            <person name="Fronick C."/>
            <person name="Gaige T."/>
            <person name="Haakenson W."/>
            <person name="Haglund K."/>
            <person name="Holmes A."/>
            <person name="Harkins R."/>
            <person name="Kim K."/>
            <person name="Kruchowski S.S."/>
            <person name="Strong C.M."/>
            <person name="Grewal N."/>
            <person name="Goyea E."/>
            <person name="Hou S."/>
            <person name="Levy A."/>
            <person name="Martinka S."/>
            <person name="Mead K."/>
            <person name="McLellan M.D."/>
            <person name="Meyer R."/>
            <person name="Randall-Maher J."/>
            <person name="Tomlinson C."/>
            <person name="Dauphin-Kohlberg S."/>
            <person name="Kozlowicz-Reilly A."/>
            <person name="Shah N."/>
            <person name="Swearengen-Shahid S."/>
            <person name="Snider J."/>
            <person name="Strong J.T."/>
            <person name="Thompson J."/>
            <person name="Yoakum M."/>
            <person name="Leonard S."/>
            <person name="Pearman C."/>
            <person name="Trani L."/>
            <person name="Radionenko M."/>
            <person name="Waligorski J.E."/>
            <person name="Wang C."/>
            <person name="Rock S.M."/>
            <person name="Tin-Wollam A.-M."/>
            <person name="Maupin R."/>
            <person name="Latreille P."/>
            <person name="Wendl M.C."/>
            <person name="Yang S.-P."/>
            <person name="Pohl C."/>
            <person name="Wallis J.W."/>
            <person name="Spieth J."/>
            <person name="Bieri T.A."/>
            <person name="Berkowicz N."/>
            <person name="Nelson J.O."/>
            <person name="Osborne J."/>
            <person name="Ding L."/>
            <person name="Meyer R."/>
            <person name="Sabo A."/>
            <person name="Shotland Y."/>
            <person name="Sinha P."/>
            <person name="Wohldmann P.E."/>
            <person name="Cook L.L."/>
            <person name="Hickenbotham M.T."/>
            <person name="Eldred J."/>
            <person name="Williams D."/>
            <person name="Jones T.A."/>
            <person name="She X."/>
            <person name="Ciccarelli F.D."/>
            <person name="Izaurralde E."/>
            <person name="Taylor J."/>
            <person name="Schmutz J."/>
            <person name="Myers R.M."/>
            <person name="Cox D.R."/>
            <person name="Huang X."/>
            <person name="McPherson J.D."/>
            <person name="Mardis E.R."/>
            <person name="Clifton S.W."/>
            <person name="Warren W.C."/>
            <person name="Chinwalla A.T."/>
            <person name="Eddy S.R."/>
            <person name="Marra M.A."/>
            <person name="Ovcharenko I."/>
            <person name="Furey T.S."/>
            <person name="Miller W."/>
            <person name="Eichler E.E."/>
            <person name="Bork P."/>
            <person name="Suyama M."/>
            <person name="Torrents D."/>
            <person name="Waterston R.H."/>
            <person name="Wilson R.K."/>
        </authorList>
    </citation>
    <scope>NUCLEOTIDE SEQUENCE [LARGE SCALE GENOMIC DNA]</scope>
</reference>
<reference key="5">
    <citation type="submission" date="2005-07" db="EMBL/GenBank/DDBJ databases">
        <authorList>
            <person name="Mural R.J."/>
            <person name="Istrail S."/>
            <person name="Sutton G.G."/>
            <person name="Florea L."/>
            <person name="Halpern A.L."/>
            <person name="Mobarry C.M."/>
            <person name="Lippert R."/>
            <person name="Walenz B."/>
            <person name="Shatkay H."/>
            <person name="Dew I."/>
            <person name="Miller J.R."/>
            <person name="Flanigan M.J."/>
            <person name="Edwards N.J."/>
            <person name="Bolanos R."/>
            <person name="Fasulo D."/>
            <person name="Halldorsson B.V."/>
            <person name="Hannenhalli S."/>
            <person name="Turner R."/>
            <person name="Yooseph S."/>
            <person name="Lu F."/>
            <person name="Nusskern D.R."/>
            <person name="Shue B.C."/>
            <person name="Zheng X.H."/>
            <person name="Zhong F."/>
            <person name="Delcher A.L."/>
            <person name="Huson D.H."/>
            <person name="Kravitz S.A."/>
            <person name="Mouchard L."/>
            <person name="Reinert K."/>
            <person name="Remington K.A."/>
            <person name="Clark A.G."/>
            <person name="Waterman M.S."/>
            <person name="Eichler E.E."/>
            <person name="Adams M.D."/>
            <person name="Hunkapiller M.W."/>
            <person name="Myers E.W."/>
            <person name="Venter J.C."/>
        </authorList>
    </citation>
    <scope>NUCLEOTIDE SEQUENCE [LARGE SCALE GENOMIC DNA]</scope>
</reference>
<reference key="6">
    <citation type="journal article" date="2004" name="Genome Res.">
        <title>The status, quality, and expansion of the NIH full-length cDNA project: the Mammalian Gene Collection (MGC).</title>
        <authorList>
            <consortium name="The MGC Project Team"/>
        </authorList>
    </citation>
    <scope>NUCLEOTIDE SEQUENCE [LARGE SCALE MRNA] (ISOFORMS 2; 3; 4 AND 5)</scope>
    <scope>VARIANT THR-56</scope>
    <source>
        <tissue>Muscle</tissue>
    </source>
</reference>
<reference key="7">
    <citation type="journal article" date="2009" name="Science">
        <title>Lysine acetylation targets protein complexes and co-regulates major cellular functions.</title>
        <authorList>
            <person name="Choudhary C."/>
            <person name="Kumar C."/>
            <person name="Gnad F."/>
            <person name="Nielsen M.L."/>
            <person name="Rehman M."/>
            <person name="Walther T.C."/>
            <person name="Olsen J.V."/>
            <person name="Mann M."/>
        </authorList>
    </citation>
    <scope>ACETYLATION [LARGE SCALE ANALYSIS] AT LYS-230</scope>
    <scope>IDENTIFICATION BY MASS SPECTROMETRY [LARGE SCALE ANALYSIS]</scope>
</reference>
<reference key="8">
    <citation type="journal article" date="2011" name="BMC Syst. Biol.">
        <title>Initial characterization of the human central proteome.</title>
        <authorList>
            <person name="Burkard T.R."/>
            <person name="Planyavsky M."/>
            <person name="Kaupe I."/>
            <person name="Breitwieser F.P."/>
            <person name="Buerckstuemmer T."/>
            <person name="Bennett K.L."/>
            <person name="Superti-Furga G."/>
            <person name="Colinge J."/>
        </authorList>
    </citation>
    <scope>IDENTIFICATION BY MASS SPECTROMETRY [LARGE SCALE ANALYSIS]</scope>
</reference>
<reference key="9">
    <citation type="journal article" date="2019" name="Nat. Genet.">
        <title>Mutations in RABL3 alter KRAS prenylation and are associated with hereditary pancreatic cancer.</title>
        <authorList>
            <person name="Nissim S."/>
            <person name="Leshchiner I."/>
            <person name="Mancias J.D."/>
            <person name="Greenblatt M.B."/>
            <person name="Maertens O."/>
            <person name="Cassa C.A."/>
            <person name="Rosenfeld J.A."/>
            <person name="Cox A.G."/>
            <person name="Hedgepeth J."/>
            <person name="Wucherpfennig J.I."/>
            <person name="Kim A.J."/>
            <person name="Henderson J.E."/>
            <person name="Gonyo P."/>
            <person name="Brandt A."/>
            <person name="Lorimer E."/>
            <person name="Unger B."/>
            <person name="Prokop J.W."/>
            <person name="Heidel J.R."/>
            <person name="Wang X.X."/>
            <person name="Ukaegbu C.I."/>
            <person name="Jennings B.C."/>
            <person name="Paulo J.A."/>
            <person name="Gableske S."/>
            <person name="Fierke C.A."/>
            <person name="Getz G."/>
            <person name="Sunyaev S.R."/>
            <person name="Wade Harper J."/>
            <person name="Cichowski K."/>
            <person name="Kimmelman A.C."/>
            <person name="Houvras Y."/>
            <person name="Syngal S."/>
            <person name="Williams C."/>
            <person name="Goessling W."/>
        </authorList>
    </citation>
    <scope>INTERACTION WITH RABL3</scope>
</reference>
<reference key="10">
    <citation type="journal article" date="1999" name="Blood">
        <title>The (4;11)(q21;p15) translocation fuses the NUP98 and RAP1GDS1 genes and is recurrent in T-cell acute lymphocytic leukemia.</title>
        <authorList>
            <person name="Hussey D.J."/>
            <person name="Nicola M."/>
            <person name="Moore S."/>
            <person name="Peters G.B."/>
            <person name="Dobrovic A."/>
        </authorList>
    </citation>
    <scope>DISEASE</scope>
    <scope>CHROMOSOMAL TRANSLOCATION WITH NUP98</scope>
</reference>
<reference key="11">
    <citation type="journal article" date="2000" name="Br. J. Haematol.">
        <title>t(4;11)(q21;p15) translocation involving NUP98 and RAP1GDS1 genes: characterization of a new subset of T acute lymphoblastic leukaemia.</title>
        <authorList>
            <person name="Mecucci C."/>
            <person name="La Starza R."/>
            <person name="Negrini M."/>
            <person name="Sabbioni S."/>
            <person name="Crescenzi B."/>
            <person name="Leoni P."/>
            <person name="Di Raimondo F."/>
            <person name="Krampera M."/>
            <person name="Cimino G."/>
            <person name="Tafuri A."/>
            <person name="Cuneo A."/>
            <person name="Vitale A."/>
            <person name="Foa R."/>
        </authorList>
    </citation>
    <scope>DISEASE</scope>
    <scope>CHROMOSOMAL TRANSLOCATION WITH NUP98</scope>
</reference>
<reference key="12">
    <citation type="journal article" date="2003" name="J. Biol. Chem.">
        <title>Novel mechanism of the co-regulation of nuclear transport of SmgGDS and Rac1.</title>
        <authorList>
            <person name="Lanning C.C."/>
            <person name="Ruiz-Velasco R."/>
            <person name="Williams C.L."/>
        </authorList>
    </citation>
    <scope>FUNCTION (ISOFORM 2)</scope>
    <scope>INTERACTION WITH RAC1 AND RHOA (ISOFORM 2)</scope>
    <scope>SUBCELLULAR LOCATION</scope>
    <scope>NUCLEAR EXPORT SIGNAL</scope>
</reference>
<reference key="13">
    <citation type="journal article" date="2010" name="J. Biol. Chem.">
        <title>Splice variants of SmgGDS control small GTPase prenylation and membrane localization.</title>
        <authorList>
            <person name="Berg T.J."/>
            <person name="Gastonguay A.J."/>
            <person name="Lorimer E.L."/>
            <person name="Kuhnmuench J.R."/>
            <person name="Li R."/>
            <person name="Fields A.P."/>
            <person name="Williams C.L."/>
        </authorList>
    </citation>
    <scope>FUNCTION (ISOFORMS 1 AND 2)</scope>
    <scope>INTERACTION WITH RAP1A; KRAS; RHOA AND RAC1 (ISOFORM 1 AND 2)</scope>
</reference>
<reference key="14">
    <citation type="journal article" date="2011" name="J. Biol. Chem.">
        <title>SmgGDS is a guanine nucleotide exchange factor that specifically activates RhoA and RhoC.</title>
        <authorList>
            <person name="Hamel B."/>
            <person name="Monaghan-Benson E."/>
            <person name="Rojas R.J."/>
            <person name="Temple B.R."/>
            <person name="Marston D.J."/>
            <person name="Burridge K."/>
            <person name="Sondek J."/>
        </authorList>
    </citation>
    <scope>FUNCTION (ISOFORM 2)</scope>
</reference>
<reference key="15">
    <citation type="journal article" date="2006" name="Genes Chromosomes Cancer">
        <title>Identification of NUP98 abnormalities in acute leukemia: JARID1A (12p13) as a new partner gene.</title>
        <authorList>
            <person name="van Zutven L.J."/>
            <person name="Onen E."/>
            <person name="Velthuizen S.C."/>
            <person name="van Drunen E."/>
            <person name="von Bergh A.R."/>
            <person name="van den Heuvel-Eibrink M.M."/>
            <person name="Veronese A."/>
            <person name="Mecucci C."/>
            <person name="Negrini M."/>
            <person name="de Greef G.E."/>
            <person name="Beverloo H.B."/>
        </authorList>
    </citation>
    <scope>DISEASE</scope>
    <scope>CHROMOSOMAL TRANSLOCATION WITH NUP98</scope>
</reference>
<reference key="16">
    <citation type="journal article" date="2013" name="PLoS ONE">
        <title>Transglutaminase 2 contributes to apoptosis induction in Jurkat T cells by modulating Ca2+ homeostasis via cross-linking RAP1GDS1.</title>
        <authorList>
            <person name="Hsieh Y.F."/>
            <person name="Liu G.Y."/>
            <person name="Lee Y.J."/>
            <person name="Yang J.J."/>
            <person name="Sandor K."/>
            <person name="Sarang Z."/>
            <person name="Bononi A."/>
            <person name="Pinton P."/>
            <person name="Tretter L."/>
            <person name="Szondy Z."/>
            <person name="Tsay G.J."/>
        </authorList>
    </citation>
    <scope>FUNCTION</scope>
    <scope>SUBCELLULAR LOCATION</scope>
    <scope>TRANSGLUTAMINATION</scope>
</reference>
<reference key="17">
    <citation type="journal article" date="2014" name="J. Biol. Chem.">
        <title>The chaperone protein SmgGDS interacts with small GTPases entering the prenylation pathway by recognizing the last amino acid in the CAAX motif.</title>
        <authorList>
            <person name="Schuld N.J."/>
            <person name="Vervacke J.S."/>
            <person name="Lorimer E.L."/>
            <person name="Simon N.C."/>
            <person name="Hauser A.D."/>
            <person name="Barbieri J.T."/>
            <person name="Distefano M.D."/>
            <person name="Williams C.L."/>
        </authorList>
    </citation>
    <scope>FUNCTION (ISOFORM 1 AND 2)</scope>
    <scope>INTERACTION WITH KRAS AND RAP1B (ISOFORM 1 AND 2)</scope>
</reference>
<reference key="18">
    <citation type="journal article" date="2016" name="PLoS Genet.">
        <title>Vimar Is a Novel Regulator of Mitochondrial Fission through Miro.</title>
        <authorList>
            <person name="Ding L."/>
            <person name="Lei Y."/>
            <person name="Han Y."/>
            <person name="Li Y."/>
            <person name="Ji X."/>
            <person name="Liu L."/>
        </authorList>
    </citation>
    <scope>FUNCTION</scope>
    <scope>INTERACTION WITH RHOT1</scope>
</reference>
<reference key="19">
    <citation type="journal article" date="2020" name="Ann. Clin. Transl. Neurol.">
        <title>Mutated RAP1GDS1 causes a new syndrome of dysmorphic feature, intellectual disability &amp; speech delay.</title>
        <authorList>
            <person name="Asiri A."/>
            <person name="Aloyouni E."/>
            <person name="Umair M."/>
            <person name="Alyafee Y."/>
            <person name="Al Tuwaijri A."/>
            <person name="Alhamoudi K.M."/>
            <person name="Almuzzaini B."/>
            <person name="Al Baz A."/>
            <person name="Alwadaani D."/>
            <person name="Nashabat M."/>
            <person name="Alfadhel M."/>
        </authorList>
    </citation>
    <scope>INVOLVEMENT IN AFDL</scope>
</reference>
<reference key="20">
    <citation type="journal article" date="2021" name="Genet. Med.">
        <title>Combining exome/genome sequencing with data repository analysis reveals novel gene-disease associations for a wide range of genetic disorders.</title>
        <authorList>
            <person name="Bertoli-Avella A.M."/>
            <person name="Kandaswamy K.K."/>
            <person name="Khan S."/>
            <person name="Ordonez-Herrera N."/>
            <person name="Tripolszki K."/>
            <person name="Beetz C."/>
            <person name="Rocha M.E."/>
            <person name="Urzi A."/>
            <person name="Hotakainen R."/>
            <person name="Leubauer A."/>
            <person name="Al-Ali R."/>
            <person name="Karageorgou V."/>
            <person name="Moldovan O."/>
            <person name="Dias P."/>
            <person name="Alhashem A."/>
            <person name="Tabarki B."/>
            <person name="Albalwi M.A."/>
            <person name="Alswaid A.F."/>
            <person name="Al-Hassnan Z.N."/>
            <person name="Alghamdi M.A."/>
            <person name="Hadipour Z."/>
            <person name="Hadipour F."/>
            <person name="Al Hashmi N."/>
            <person name="Al-Gazali L."/>
            <person name="Cheema H."/>
            <person name="Zaki M.S."/>
            <person name="Huening I."/>
            <person name="Alfares A."/>
            <person name="Eyaid W."/>
            <person name="Al Mutairi F."/>
            <person name="Alfadhel M."/>
            <person name="Alkuraya F.S."/>
            <person name="Al-Sannaa N.A."/>
            <person name="AlShamsi A.M."/>
            <person name="Ameziane N."/>
            <person name="Rolfs A."/>
            <person name="Bauer P."/>
        </authorList>
    </citation>
    <scope>INVOLVEMENT IN AFDL</scope>
</reference>
<reference evidence="27" key="21">
    <citation type="journal article" date="2017" name="J. Biol. Chem.">
        <title>Structure-based analysis of the guanine nucleotide exchange factor SmgGDS reveals armadillo-repeat motifs and key regions for activity and GTPase binding.</title>
        <authorList>
            <person name="Shimizu H."/>
            <person name="Toma-Fukai S."/>
            <person name="Saijo S."/>
            <person name="Shimizu N."/>
            <person name="Kontani K."/>
            <person name="Katada T."/>
            <person name="Shimizu T."/>
        </authorList>
    </citation>
    <scope>X-RAY CRYSTALLOGRAPHY (2.10 ANGSTROMS) OF 61-121 AND 171-607</scope>
    <scope>FUNCTION (ISOFORM 1 AND 2)</scope>
    <scope>INTERACTION WITH RHOA (ISOFORM 1 AND 2)</scope>
</reference>
<reference evidence="28" key="22">
    <citation type="journal article" date="2018" name="Proc. Natl. Acad. Sci. U.S.A.">
        <title>GEF mechanism revealed by the structure of SmgGDS-558 and farnesylated RhoA complex and its implication for a chaperone mechanism.</title>
        <authorList>
            <person name="Shimizu H."/>
            <person name="Toma-Fukai S."/>
            <person name="Kontani K."/>
            <person name="Katada T."/>
            <person name="Shimizu T."/>
        </authorList>
    </citation>
    <scope>X-RAY CRYSTALLOGRAPHY (3.50 ANGSTROMS) OF 61-121 AND 171-607 IN COMPLEX WITH RHOA</scope>
    <scope>FUNCTION (ISOFORM 1 AND 2)</scope>
    <scope>INTERACTION WITH RHOA (ISOFORM 1 AND 2)</scope>
</reference>
<organism>
    <name type="scientific">Homo sapiens</name>
    <name type="common">Human</name>
    <dbReference type="NCBI Taxonomy" id="9606"/>
    <lineage>
        <taxon>Eukaryota</taxon>
        <taxon>Metazoa</taxon>
        <taxon>Chordata</taxon>
        <taxon>Craniata</taxon>
        <taxon>Vertebrata</taxon>
        <taxon>Euteleostomi</taxon>
        <taxon>Mammalia</taxon>
        <taxon>Eutheria</taxon>
        <taxon>Euarchontoglires</taxon>
        <taxon>Primates</taxon>
        <taxon>Haplorrhini</taxon>
        <taxon>Catarrhini</taxon>
        <taxon>Hominidae</taxon>
        <taxon>Homo</taxon>
    </lineage>
</organism>
<proteinExistence type="evidence at protein level"/>
<feature type="chain" id="PRO_0000056759" description="Rap1 GTPase-GDP dissociation stimulator 1">
    <location>
        <begin position="1"/>
        <end position="607"/>
    </location>
</feature>
<feature type="repeat" description="ARM 1" evidence="2">
    <location>
        <begin position="89"/>
        <end position="131"/>
    </location>
</feature>
<feature type="repeat" description="ARM 2" evidence="1">
    <location>
        <begin position="170"/>
        <end position="211"/>
    </location>
</feature>
<feature type="repeat" description="ARM 3" evidence="1">
    <location>
        <begin position="347"/>
        <end position="390"/>
    </location>
</feature>
<feature type="repeat" description="ARM 4" evidence="1">
    <location>
        <begin position="391"/>
        <end position="431"/>
    </location>
</feature>
<feature type="repeat" description="ARM 5" evidence="1">
    <location>
        <begin position="479"/>
        <end position="519"/>
    </location>
</feature>
<feature type="region of interest" description="Prevents binding to prenylated RHOA" evidence="16">
    <location>
        <begin position="122"/>
        <end position="170"/>
    </location>
</feature>
<feature type="region of interest" description="Interacts with polybasic regions in GTPases" evidence="11 15">
    <location>
        <begin position="239"/>
        <end position="255"/>
    </location>
</feature>
<feature type="region of interest" description="Critical for catalytic activity" evidence="11 15">
    <location>
        <begin position="379"/>
        <end position="428"/>
    </location>
</feature>
<feature type="short sequence motif" description="Nuclear export signal (NES)" evidence="6">
    <location>
        <begin position="4"/>
        <end position="13"/>
    </location>
</feature>
<feature type="site" description="Breakpoint for translocation to form the NUP98-RAP1GDS1 fusion protein" evidence="3 9">
    <location>
        <begin position="1"/>
        <end position="2"/>
    </location>
</feature>
<feature type="modified residue" description="N6-acetyllysine" evidence="29">
    <location>
        <position position="230"/>
    </location>
</feature>
<feature type="splice variant" id="VSP_043660" description="In isoform 3, isoform 4, isoform 5 and isoform 6." evidence="21">
    <original>M</original>
    <variation>MA</variation>
    <location>
        <position position="1"/>
    </location>
</feature>
<feature type="splice variant" id="VSP_047041" description="In isoform 6." evidence="25">
    <original>HEGRSAVDQAGGAQIVIDHLRSLCSITDPANEKLLTVFCGMLMNYSNENDSLQAQLINMGVIPTLVKLLGIHCQNAALTEMCLVAFGNLAELE</original>
    <variation>Q</variation>
    <location>
        <begin position="121"/>
        <end position="213"/>
    </location>
</feature>
<feature type="splice variant" id="VSP_001658" description="In isoform 2 and isoform 3." evidence="21 22">
    <location>
        <begin position="122"/>
        <end position="170"/>
    </location>
</feature>
<feature type="splice variant" id="VSP_046214" description="In isoform 4." evidence="21">
    <location>
        <position position="434"/>
    </location>
</feature>
<feature type="sequence variant" id="VAR_069149" description="In dbSNP:rs17849535." evidence="7">
    <original>S</original>
    <variation>T</variation>
    <location>
        <position position="56"/>
    </location>
</feature>
<feature type="sequence variant" id="VAR_049158" description="In dbSNP:rs34392334.">
    <original>K</original>
    <variation>E</variation>
    <location>
        <position position="314"/>
    </location>
</feature>
<feature type="sequence conflict" description="In Ref. 6; AAH98269." evidence="25" ref="6">
    <original>E</original>
    <variation>G</variation>
    <location>
        <position position="237"/>
    </location>
</feature>
<feature type="sequence conflict" description="In Ref. 3; AAF43211." evidence="25" ref="3">
    <original>T</original>
    <variation>P</variation>
    <location>
        <position position="376"/>
    </location>
</feature>
<feature type="sequence conflict" description="In Ref. 1; CAA45067 and 2; AAF32290." evidence="25" ref="1 2">
    <original>N</original>
    <variation>D</variation>
    <location>
        <position position="394"/>
    </location>
</feature>
<feature type="sequence conflict" description="In Ref. 1; CAA45067 and 2; AAF32290." evidence="25" ref="1 2">
    <original>A</original>
    <variation>R</variation>
    <location>
        <position position="593"/>
    </location>
</feature>
<feature type="helix" evidence="30">
    <location>
        <begin position="88"/>
        <end position="97"/>
    </location>
</feature>
<feature type="helix" evidence="30">
    <location>
        <begin position="103"/>
        <end position="115"/>
    </location>
</feature>
<feature type="helix" evidence="30">
    <location>
        <begin position="171"/>
        <end position="178"/>
    </location>
</feature>
<feature type="helix" evidence="30">
    <location>
        <begin position="181"/>
        <end position="191"/>
    </location>
</feature>
<feature type="turn" evidence="30">
    <location>
        <begin position="192"/>
        <end position="194"/>
    </location>
</feature>
<feature type="helix" evidence="30">
    <location>
        <begin position="196"/>
        <end position="209"/>
    </location>
</feature>
<feature type="helix" evidence="30">
    <location>
        <begin position="213"/>
        <end position="219"/>
    </location>
</feature>
<feature type="turn" evidence="30">
    <location>
        <begin position="220"/>
        <end position="223"/>
    </location>
</feature>
<feature type="helix" evidence="30">
    <location>
        <begin position="224"/>
        <end position="234"/>
    </location>
</feature>
<feature type="helix" evidence="30">
    <location>
        <begin position="238"/>
        <end position="251"/>
    </location>
</feature>
<feature type="helix" evidence="30">
    <location>
        <begin position="255"/>
        <end position="263"/>
    </location>
</feature>
<feature type="helix" evidence="30">
    <location>
        <begin position="266"/>
        <end position="277"/>
    </location>
</feature>
<feature type="helix" evidence="30">
    <location>
        <begin position="283"/>
        <end position="299"/>
    </location>
</feature>
<feature type="helix" evidence="30">
    <location>
        <begin position="303"/>
        <end position="310"/>
    </location>
</feature>
<feature type="helix" evidence="30">
    <location>
        <begin position="311"/>
        <end position="313"/>
    </location>
</feature>
<feature type="helix" evidence="30">
    <location>
        <begin position="316"/>
        <end position="324"/>
    </location>
</feature>
<feature type="helix" evidence="30">
    <location>
        <begin position="330"/>
        <end position="343"/>
    </location>
</feature>
<feature type="helix" evidence="30">
    <location>
        <begin position="347"/>
        <end position="355"/>
    </location>
</feature>
<feature type="helix" evidence="30">
    <location>
        <begin position="358"/>
        <end position="367"/>
    </location>
</feature>
<feature type="turn" evidence="30">
    <location>
        <begin position="368"/>
        <end position="372"/>
    </location>
</feature>
<feature type="helix" evidence="30">
    <location>
        <begin position="375"/>
        <end position="388"/>
    </location>
</feature>
<feature type="helix" evidence="30">
    <location>
        <begin position="392"/>
        <end position="401"/>
    </location>
</feature>
<feature type="helix" evidence="30">
    <location>
        <begin position="403"/>
        <end position="408"/>
    </location>
</feature>
<feature type="turn" evidence="30">
    <location>
        <begin position="409"/>
        <end position="412"/>
    </location>
</feature>
<feature type="helix" evidence="30">
    <location>
        <begin position="416"/>
        <end position="429"/>
    </location>
</feature>
<feature type="turn" evidence="30">
    <location>
        <begin position="430"/>
        <end position="432"/>
    </location>
</feature>
<feature type="helix" evidence="30">
    <location>
        <begin position="434"/>
        <end position="441"/>
    </location>
</feature>
<feature type="helix" evidence="30">
    <location>
        <begin position="444"/>
        <end position="454"/>
    </location>
</feature>
<feature type="helix" evidence="30">
    <location>
        <begin position="460"/>
        <end position="477"/>
    </location>
</feature>
<feature type="helix" evidence="30">
    <location>
        <begin position="480"/>
        <end position="489"/>
    </location>
</feature>
<feature type="helix" evidence="30">
    <location>
        <begin position="491"/>
        <end position="498"/>
    </location>
</feature>
<feature type="helix" evidence="30">
    <location>
        <begin position="504"/>
        <end position="531"/>
    </location>
</feature>
<feature type="helix" evidence="30">
    <location>
        <begin position="534"/>
        <end position="540"/>
    </location>
</feature>
<feature type="helix" evidence="30">
    <location>
        <begin position="550"/>
        <end position="553"/>
    </location>
</feature>
<feature type="helix" evidence="30">
    <location>
        <begin position="554"/>
        <end position="562"/>
    </location>
</feature>
<feature type="strand" evidence="31">
    <location>
        <begin position="564"/>
        <end position="566"/>
    </location>
</feature>
<feature type="helix" evidence="30">
    <location>
        <begin position="572"/>
        <end position="574"/>
    </location>
</feature>
<feature type="helix" evidence="30">
    <location>
        <begin position="576"/>
        <end position="580"/>
    </location>
</feature>
<feature type="turn" evidence="31">
    <location>
        <begin position="582"/>
        <end position="584"/>
    </location>
</feature>
<feature type="helix" evidence="30">
    <location>
        <begin position="590"/>
        <end position="605"/>
    </location>
</feature>
<keyword id="KW-0002">3D-structure</keyword>
<keyword id="KW-0007">Acetylation</keyword>
<keyword id="KW-0025">Alternative splicing</keyword>
<keyword id="KW-0160">Chromosomal rearrangement</keyword>
<keyword id="KW-0963">Cytoplasm</keyword>
<keyword id="KW-0256">Endoplasmic reticulum</keyword>
<keyword id="KW-0344">Guanine-nucleotide releasing factor</keyword>
<keyword id="KW-0991">Intellectual disability</keyword>
<keyword id="KW-0496">Mitochondrion</keyword>
<keyword id="KW-0539">Nucleus</keyword>
<keyword id="KW-1267">Proteomics identification</keyword>
<keyword id="KW-1185">Reference proteome</keyword>
<keyword id="KW-0677">Repeat</keyword>
<comment type="function">
    <text evidence="5 8 10 11 12 13 14 15 16 26">Acts as a GEF (guanine nucleotide exchange factor) for the Rho family of small GTP-binding proteins (G proteins) that stimulates the dissociation of GDP to enable subsequent binding of GTP (PubMed:11948427, PubMed:1549351, PubMed:20709748, PubMed:28630045, PubMed:30190425). Additionally, appears to chaperone the processing and/or trafficking of small GTPases containing a C-terminal polybasic region independently of GEF activity (PubMed:20709748, PubMed:21242305). Targets include RAP1A/RAP1B, RHOA, RHOB, RHOC, RAC1 and KRAS (PubMed:11948427, PubMed:1549351, PubMed:20709748, PubMed:24415755). Regulates mitochondrial dynamics by controlling RHOT function to promote mitochondrial fission during high calcium conditions (PubMed:27716788). Able to promote the Ca(2+) release from the endoplasmic reticulum via both inositol trisphosphate (Ins3P) and ryanodine sensitive receptors leading to a enhanced mitochondrial Ca(2+) uptake (PubMed:24349085).</text>
</comment>
<comment type="function">
    <molecule>Isoform 1</molecule>
    <text evidence="10 13 15 16">Acts as a GEF (guanine nucleotide exchange factor) for unprenylated RHOA (PubMed:24415755, PubMed:28630045, PubMed:30190425). Chaperones the entry and passage of small GTPases through the prenylation pathway (PubMed:20709748). Recognizes the last amino acid in the GTPase C-terminal CAAX motif with a preference for 'Leu' over 'Met', indicating involvement in the geranylgeranylation pathway (PubMed:24415755).</text>
</comment>
<comment type="function">
    <molecule>Isoform 2</molecule>
    <text evidence="6 10 11 15 16">Acts as a GEF (guanine nucleotide exchange factor) for prenylated RHOA (PubMed:21242305, PubMed:28630045, PubMed:30190425). Acts as a GEF for RHOC (PubMed:21242305). Chaperones the downstream trafficking and/or processing of small newly prenylated GTPases (PubMed:20709748). Escorts RAC1 to the nucleus (PubMed:12551911).</text>
</comment>
<comment type="subunit">
    <text evidence="14 17">Interacts with RABL3 (PubMed:31406347). Interacts with RHOT1 (PubMed:27716788).</text>
</comment>
<comment type="subunit">
    <molecule>Isoform 1</molecule>
    <text evidence="10 13 15 16">Interacts with unprenylated RHOA; the interaction is direct (PubMed:20709748, PubMed:28630045, PubMed:30190425). Interacts with RAP1A (PubMed:20709748). Interacts with KRAS (PubMed:20709748, PubMed:24415755). Interacts with RAC1 (PubMed:20709748). Interacts with RAP1B (PubMed:24415755). Preferentially interacts with unprenylated GTPases that will become geranylgeranylated (PubMed:24415755). May also interact with prenylated GTPases (PubMed:24415755).</text>
</comment>
<comment type="subunit">
    <molecule>Isoform 2</molecule>
    <text evidence="6 10 13 15 16">Interacts with prenylated RHOA; the interaction is direct and in a 1:1 stoichiometry (PubMed:12551911, PubMed:20709748, PubMed:28630045, PubMed:30190425). Interacts with RAP1A (PubMed:20709748). Interacts with KRAS (PubMed:20709748, PubMed:24415755). Interacts with RAC1 (PubMed:12551911, PubMed:20709748). Interacts with RAP1B (PubMed:24415755). Preferentially interacts with prenylated GTPases (PubMed:24415755).</text>
</comment>
<comment type="interaction">
    <interactant intactId="EBI-746389">
        <id>P52306</id>
    </interactant>
    <interactant intactId="EBI-10182361">
        <id>Q9NS73-5</id>
        <label>MBIP</label>
    </interactant>
    <organismsDiffer>false</organismsDiffer>
    <experiments>3</experiments>
</comment>
<comment type="interaction">
    <interactant intactId="EBI-746389">
        <id>P52306</id>
    </interactant>
    <interactant intactId="EBI-6447271">
        <id>Q9UF11</id>
        <label>PLEKHB1</label>
    </interactant>
    <organismsDiffer>false</organismsDiffer>
    <experiments>5</experiments>
</comment>
<comment type="interaction">
    <interactant intactId="EBI-746389">
        <id>P52306</id>
    </interactant>
    <interactant intactId="EBI-413628">
        <id>P63000</id>
        <label>RAC1</label>
    </interactant>
    <organismsDiffer>false</organismsDiffer>
    <experiments>4</experiments>
</comment>
<comment type="interaction">
    <interactant intactId="EBI-746389">
        <id>P52306</id>
    </interactant>
    <interactant intactId="EBI-167586">
        <id>Q8IMX7</id>
        <label>Miro</label>
    </interactant>
    <organismsDiffer>true</organismsDiffer>
    <experiments>2</experiments>
</comment>
<comment type="interaction">
    <interactant intactId="EBI-746389">
        <id>P52306</id>
    </interactant>
    <interactant intactId="EBI-25475859">
        <id>PRO_0000449620</id>
        <label>rep</label>
        <dbReference type="UniProtKB" id="P0DTD1"/>
    </interactant>
    <organismsDiffer>true</organismsDiffer>
    <experiments>6</experiments>
</comment>
<comment type="interaction">
    <interactant intactId="EBI-25910540">
        <id>P52306-4</id>
    </interactant>
    <interactant intactId="EBI-748974">
        <id>Q96CV9</id>
        <label>OPTN</label>
    </interactant>
    <organismsDiffer>false</organismsDiffer>
    <experiments>3</experiments>
</comment>
<comment type="interaction">
    <interactant intactId="EBI-12832744">
        <id>P52306-5</id>
    </interactant>
    <interactant intactId="EBI-11993172">
        <id>O95057</id>
        <label>DIRAS1</label>
    </interactant>
    <organismsDiffer>false</organismsDiffer>
    <experiments>5</experiments>
</comment>
<comment type="interaction">
    <interactant intactId="EBI-12832744">
        <id>P52306-5</id>
    </interactant>
    <interactant intactId="EBI-911391">
        <id>Q96HU8</id>
        <label>DIRAS2</label>
    </interactant>
    <organismsDiffer>false</organismsDiffer>
    <experiments>3</experiments>
</comment>
<comment type="interaction">
    <interactant intactId="EBI-12832744">
        <id>P52306-5</id>
    </interactant>
    <interactant intactId="EBI-13290525">
        <id>P01112-2</id>
        <label>HRAS</label>
    </interactant>
    <organismsDiffer>false</organismsDiffer>
    <experiments>5</experiments>
</comment>
<comment type="interaction">
    <interactant intactId="EBI-12832744">
        <id>P52306-5</id>
    </interactant>
    <interactant intactId="EBI-721993">
        <id>P01111</id>
        <label>NRAS</label>
    </interactant>
    <organismsDiffer>false</organismsDiffer>
    <experiments>6</experiments>
</comment>
<comment type="interaction">
    <interactant intactId="EBI-12832744">
        <id>P52306-5</id>
    </interactant>
    <interactant intactId="EBI-12832742">
        <id>Q9UF11-2</id>
        <label>PLEKHB1</label>
    </interactant>
    <organismsDiffer>false</organismsDiffer>
    <experiments>5</experiments>
</comment>
<comment type="interaction">
    <interactant intactId="EBI-12832744">
        <id>P52306-5</id>
    </interactant>
    <interactant intactId="EBI-1760079">
        <id>Q9NRW1</id>
        <label>RAB6B</label>
    </interactant>
    <organismsDiffer>false</organismsDiffer>
    <experiments>5</experiments>
</comment>
<comment type="interaction">
    <interactant intactId="EBI-12832744">
        <id>P52306-5</id>
    </interactant>
    <interactant intactId="EBI-750871">
        <id>P61225</id>
        <label>RAP2B</label>
    </interactant>
    <organismsDiffer>false</organismsDiffer>
    <experiments>3</experiments>
</comment>
<comment type="interaction">
    <interactant intactId="EBI-12832744">
        <id>P52306-5</id>
    </interactant>
    <interactant intactId="EBI-2856617">
        <id>Q9Y3L5</id>
        <label>RAP2C</label>
    </interactant>
    <organismsDiffer>false</organismsDiffer>
    <experiments>3</experiments>
</comment>
<comment type="interaction">
    <interactant intactId="EBI-12832744">
        <id>P52306-5</id>
    </interactant>
    <interactant intactId="EBI-2466594">
        <id>Q6ZMZ0</id>
        <label>RNF19B</label>
    </interactant>
    <organismsDiffer>false</organismsDiffer>
    <experiments>3</experiments>
</comment>
<comment type="interaction">
    <interactant intactId="EBI-12832744">
        <id>P52306-5</id>
    </interactant>
    <interactant intactId="EBI-968703">
        <id>P10301</id>
        <label>RRAS</label>
    </interactant>
    <organismsDiffer>false</organismsDiffer>
    <experiments>3</experiments>
</comment>
<comment type="interaction">
    <interactant intactId="EBI-12832744">
        <id>P52306-5</id>
    </interactant>
    <interactant intactId="EBI-491037">
        <id>P62070</id>
        <label>RRAS2</label>
    </interactant>
    <organismsDiffer>false</organismsDiffer>
    <experiments>3</experiments>
</comment>
<comment type="subcellular location">
    <subcellularLocation>
        <location evidence="12">Cytoplasm</location>
        <location evidence="12">Cytosol</location>
    </subcellularLocation>
    <subcellularLocation>
        <location evidence="12">Endoplasmic reticulum</location>
    </subcellularLocation>
    <subcellularLocation>
        <location evidence="12">Mitochondrion</location>
    </subcellularLocation>
    <subcellularLocation>
        <location evidence="6">Nucleus</location>
    </subcellularLocation>
    <text evidence="6">Nuclear import is dependent on complexing with a GTPase containing a C-terminal polybasic region.</text>
</comment>
<comment type="alternative products">
    <event type="alternative splicing"/>
    <isoform>
        <id>P52306-1</id>
        <name>1</name>
        <name evidence="23">SmgGDS-607</name>
        <sequence type="displayed"/>
    </isoform>
    <isoform>
        <id>P52306-2</id>
        <name>2</name>
        <name evidence="23">SmgGDS-558</name>
        <sequence type="described" ref="VSP_001658"/>
    </isoform>
    <isoform>
        <id>P52306-3</id>
        <name>3</name>
        <sequence type="described" ref="VSP_043660 VSP_001658"/>
    </isoform>
    <isoform>
        <id>P52306-4</id>
        <name>4</name>
        <sequence type="described" ref="VSP_043660 VSP_046214"/>
    </isoform>
    <isoform>
        <id>P52306-5</id>
        <name>5</name>
        <sequence type="described" ref="VSP_043660"/>
    </isoform>
    <isoform>
        <id>P52306-6</id>
        <name>6</name>
        <sequence type="described" ref="VSP_043660 VSP_047041"/>
    </isoform>
</comment>
<comment type="PTM">
    <text evidence="12">Forms covalent cross-links mediated by transglutaminase TGM2, between a glutamine and the epsilon-amino group of a lysine residue, forming homopolymers and heteropolymers.</text>
</comment>
<comment type="disease" evidence="18 19">
    <disease id="DI-06815">
        <name>Alfadhel syndrome</name>
        <acronym>AFDL</acronym>
        <description>An autosomal recessive neurodevelopmental disorder characterized by global developmental delay and regression, intellectual disability, hypotonia, delayed motor development, stereotypy, behavioral abnormalities, and dysmorphic features.</description>
        <dbReference type="MIM" id="620655"/>
    </disease>
    <text>The disease is caused by variants affecting the gene represented in this entry.</text>
</comment>
<comment type="disease">
    <text evidence="9">A chromosomal aberration involving RAP1GDS1 has been found in M0 type acute myeloid leukemia. Translocation (t4;11)(q23;p15) with NUP98.</text>
</comment>
<comment type="disease">
    <text evidence="3 4">A chromosomal aberration involving RAP1GDS1 has been found in T-cell acute lymphocytic leukemia. Translocation t(4;11)(q23;p15) with NUP98.</text>
</comment>
<comment type="online information" name="Atlas of Genetics and Cytogenetics in Oncology and Haematology">
    <link uri="https://atlasgeneticsoncology.org/gene/400/RAP1GDS1"/>
</comment>
<accession>P52306</accession>
<accession>E9PH06</accession>
<accession>G5E9P9</accession>
<accession>Q499L7</accession>
<accession>Q4KMV2</accession>
<accession>Q4QQI8</accession>
<accession>Q9BUW9</accession>
<accession>Q9BUX6</accession>
<accession>Q9NYM2</accession>
<accession>Q9NZA8</accession>
<name>GDS1_HUMAN</name>